<dbReference type="EC" id="2.4.2.9" evidence="1"/>
<dbReference type="EMBL" id="CP000660">
    <property type="protein sequence ID" value="ABP51674.1"/>
    <property type="molecule type" value="Genomic_DNA"/>
</dbReference>
<dbReference type="SMR" id="A4WMQ7"/>
<dbReference type="STRING" id="340102.Pars_2128"/>
<dbReference type="KEGG" id="pas:Pars_2128"/>
<dbReference type="HOGENOM" id="CLU_067096_2_0_2"/>
<dbReference type="OrthoDB" id="80352at2157"/>
<dbReference type="PhylomeDB" id="A4WMQ7"/>
<dbReference type="UniPathway" id="UPA00574">
    <property type="reaction ID" value="UER00636"/>
</dbReference>
<dbReference type="Proteomes" id="UP000001567">
    <property type="component" value="Chromosome"/>
</dbReference>
<dbReference type="GO" id="GO:0005525">
    <property type="term" value="F:GTP binding"/>
    <property type="evidence" value="ECO:0007669"/>
    <property type="project" value="UniProtKB-KW"/>
</dbReference>
<dbReference type="GO" id="GO:0000287">
    <property type="term" value="F:magnesium ion binding"/>
    <property type="evidence" value="ECO:0007669"/>
    <property type="project" value="UniProtKB-UniRule"/>
</dbReference>
<dbReference type="GO" id="GO:0004845">
    <property type="term" value="F:uracil phosphoribosyltransferase activity"/>
    <property type="evidence" value="ECO:0007669"/>
    <property type="project" value="UniProtKB-UniRule"/>
</dbReference>
<dbReference type="GO" id="GO:0044206">
    <property type="term" value="P:UMP salvage"/>
    <property type="evidence" value="ECO:0007669"/>
    <property type="project" value="UniProtKB-UniRule"/>
</dbReference>
<dbReference type="GO" id="GO:0006223">
    <property type="term" value="P:uracil salvage"/>
    <property type="evidence" value="ECO:0007669"/>
    <property type="project" value="InterPro"/>
</dbReference>
<dbReference type="CDD" id="cd06223">
    <property type="entry name" value="PRTases_typeI"/>
    <property type="match status" value="1"/>
</dbReference>
<dbReference type="Gene3D" id="3.40.50.2020">
    <property type="match status" value="1"/>
</dbReference>
<dbReference type="HAMAP" id="MF_01218_A">
    <property type="entry name" value="Upp_A"/>
    <property type="match status" value="1"/>
</dbReference>
<dbReference type="InterPro" id="IPR000836">
    <property type="entry name" value="PRibTrfase_dom"/>
</dbReference>
<dbReference type="InterPro" id="IPR029057">
    <property type="entry name" value="PRTase-like"/>
</dbReference>
<dbReference type="InterPro" id="IPR034331">
    <property type="entry name" value="Upp_A"/>
</dbReference>
<dbReference type="InterPro" id="IPR005765">
    <property type="entry name" value="Ura_phspho_trans"/>
</dbReference>
<dbReference type="NCBIfam" id="NF001097">
    <property type="entry name" value="PRK00129.1"/>
    <property type="match status" value="1"/>
</dbReference>
<dbReference type="NCBIfam" id="TIGR01091">
    <property type="entry name" value="upp"/>
    <property type="match status" value="1"/>
</dbReference>
<dbReference type="Pfam" id="PF14681">
    <property type="entry name" value="UPRTase"/>
    <property type="match status" value="1"/>
</dbReference>
<dbReference type="SUPFAM" id="SSF53271">
    <property type="entry name" value="PRTase-like"/>
    <property type="match status" value="1"/>
</dbReference>
<organism>
    <name type="scientific">Pyrobaculum arsenaticum (strain DSM 13514 / JCM 11321 / PZ6)</name>
    <dbReference type="NCBI Taxonomy" id="340102"/>
    <lineage>
        <taxon>Archaea</taxon>
        <taxon>Thermoproteota</taxon>
        <taxon>Thermoprotei</taxon>
        <taxon>Thermoproteales</taxon>
        <taxon>Thermoproteaceae</taxon>
        <taxon>Pyrobaculum</taxon>
    </lineage>
</organism>
<keyword id="KW-0021">Allosteric enzyme</keyword>
<keyword id="KW-0328">Glycosyltransferase</keyword>
<keyword id="KW-0342">GTP-binding</keyword>
<keyword id="KW-0460">Magnesium</keyword>
<keyword id="KW-0547">Nucleotide-binding</keyword>
<keyword id="KW-0808">Transferase</keyword>
<accession>A4WMQ7</accession>
<comment type="function">
    <text evidence="1">Catalyzes the conversion of uracil and 5-phospho-alpha-D-ribose 1-diphosphate (PRPP) to UMP and diphosphate.</text>
</comment>
<comment type="catalytic activity">
    <reaction evidence="1">
        <text>UMP + diphosphate = 5-phospho-alpha-D-ribose 1-diphosphate + uracil</text>
        <dbReference type="Rhea" id="RHEA:13017"/>
        <dbReference type="ChEBI" id="CHEBI:17568"/>
        <dbReference type="ChEBI" id="CHEBI:33019"/>
        <dbReference type="ChEBI" id="CHEBI:57865"/>
        <dbReference type="ChEBI" id="CHEBI:58017"/>
        <dbReference type="EC" id="2.4.2.9"/>
    </reaction>
</comment>
<comment type="cofactor">
    <cofactor evidence="1">
        <name>Mg(2+)</name>
        <dbReference type="ChEBI" id="CHEBI:18420"/>
    </cofactor>
    <text evidence="1">Binds 1 Mg(2+) ion per subunit. The magnesium is bound as Mg-PRPP.</text>
</comment>
<comment type="activity regulation">
    <text evidence="1">Allosterically activated by GTP.</text>
</comment>
<comment type="pathway">
    <text evidence="1">Pyrimidine metabolism; UMP biosynthesis via salvage pathway; UMP from uracil: step 1/1.</text>
</comment>
<comment type="similarity">
    <text evidence="1">Belongs to the UPRTase family.</text>
</comment>
<sequence length="211" mass="23134">MPVRIIDHVYAQYLLTRLRDKNTGSLDFRKGLVRLGRIIGYELVKTFPFRYVEVETPLGRAVGVDIIGLDKVVIVQILRAAMPLVEGLVKAFPNARLGVVAARRKEEEGYVDVEVFYSKMPSIGVEDTVIVADPMLATGTTMSKAIEEVYKTGTPGRLVVVSVIATPVGISRVLSRWPDTEIYTVAIDPELNDKAFIVPGLGDAGDRAFAT</sequence>
<name>UPP_PYRAR</name>
<proteinExistence type="inferred from homology"/>
<reference key="1">
    <citation type="submission" date="2007-04" db="EMBL/GenBank/DDBJ databases">
        <title>Complete sequence of Pyrobaculum arsenaticum DSM 13514.</title>
        <authorList>
            <consortium name="US DOE Joint Genome Institute"/>
            <person name="Copeland A."/>
            <person name="Lucas S."/>
            <person name="Lapidus A."/>
            <person name="Barry K."/>
            <person name="Glavina del Rio T."/>
            <person name="Dalin E."/>
            <person name="Tice H."/>
            <person name="Pitluck S."/>
            <person name="Chain P."/>
            <person name="Malfatti S."/>
            <person name="Shin M."/>
            <person name="Vergez L."/>
            <person name="Schmutz J."/>
            <person name="Larimer F."/>
            <person name="Land M."/>
            <person name="Hauser L."/>
            <person name="Kyrpides N."/>
            <person name="Mikhailova N."/>
            <person name="Cozen A.E."/>
            <person name="Fitz-Gibbon S.T."/>
            <person name="House C.H."/>
            <person name="Saltikov C."/>
            <person name="Lowe T.M."/>
            <person name="Richardson P."/>
        </authorList>
    </citation>
    <scope>NUCLEOTIDE SEQUENCE [LARGE SCALE GENOMIC DNA]</scope>
    <source>
        <strain>ATCC 700994 / DSM 13514 / JCM 11321 / PZ6</strain>
    </source>
</reference>
<feature type="chain" id="PRO_1000053770" description="Uracil phosphoribosyltransferase">
    <location>
        <begin position="1"/>
        <end position="211"/>
    </location>
</feature>
<feature type="binding site" evidence="1">
    <location>
        <begin position="30"/>
        <end position="34"/>
    </location>
    <ligand>
        <name>GTP</name>
        <dbReference type="ChEBI" id="CHEBI:37565"/>
    </ligand>
</feature>
<feature type="binding site" evidence="1">
    <location>
        <position position="79"/>
    </location>
    <ligand>
        <name>5-phospho-alpha-D-ribose 1-diphosphate</name>
        <dbReference type="ChEBI" id="CHEBI:58017"/>
    </ligand>
</feature>
<feature type="binding site" evidence="1">
    <location>
        <position position="104"/>
    </location>
    <ligand>
        <name>5-phospho-alpha-D-ribose 1-diphosphate</name>
        <dbReference type="ChEBI" id="CHEBI:58017"/>
    </ligand>
</feature>
<feature type="binding site" evidence="1">
    <location>
        <begin position="133"/>
        <end position="141"/>
    </location>
    <ligand>
        <name>5-phospho-alpha-D-ribose 1-diphosphate</name>
        <dbReference type="ChEBI" id="CHEBI:58017"/>
    </ligand>
</feature>
<feature type="binding site" evidence="1">
    <location>
        <position position="197"/>
    </location>
    <ligand>
        <name>uracil</name>
        <dbReference type="ChEBI" id="CHEBI:17568"/>
    </ligand>
</feature>
<feature type="binding site" evidence="1">
    <location>
        <begin position="202"/>
        <end position="204"/>
    </location>
    <ligand>
        <name>uracil</name>
        <dbReference type="ChEBI" id="CHEBI:17568"/>
    </ligand>
</feature>
<feature type="binding site" evidence="1">
    <location>
        <position position="203"/>
    </location>
    <ligand>
        <name>5-phospho-alpha-D-ribose 1-diphosphate</name>
        <dbReference type="ChEBI" id="CHEBI:58017"/>
    </ligand>
</feature>
<gene>
    <name evidence="1" type="primary">upp</name>
    <name type="ordered locus">Pars_2128</name>
</gene>
<protein>
    <recommendedName>
        <fullName evidence="1">Uracil phosphoribosyltransferase</fullName>
        <ecNumber evidence="1">2.4.2.9</ecNumber>
    </recommendedName>
    <alternativeName>
        <fullName evidence="1">UMP pyrophosphorylase</fullName>
    </alternativeName>
    <alternativeName>
        <fullName evidence="1">UPRTase</fullName>
    </alternativeName>
</protein>
<evidence type="ECO:0000255" key="1">
    <source>
        <dbReference type="HAMAP-Rule" id="MF_01218"/>
    </source>
</evidence>